<keyword id="KW-0687">Ribonucleoprotein</keyword>
<keyword id="KW-0689">Ribosomal protein</keyword>
<keyword id="KW-0694">RNA-binding</keyword>
<keyword id="KW-0699">rRNA-binding</keyword>
<organism>
    <name type="scientific">Rhodococcus erythropolis (strain PR4 / NBRC 100887)</name>
    <dbReference type="NCBI Taxonomy" id="234621"/>
    <lineage>
        <taxon>Bacteria</taxon>
        <taxon>Bacillati</taxon>
        <taxon>Actinomycetota</taxon>
        <taxon>Actinomycetes</taxon>
        <taxon>Mycobacteriales</taxon>
        <taxon>Nocardiaceae</taxon>
        <taxon>Rhodococcus</taxon>
        <taxon>Rhodococcus erythropolis group</taxon>
    </lineage>
</organism>
<dbReference type="EMBL" id="AP008957">
    <property type="protein sequence ID" value="BAH34502.1"/>
    <property type="molecule type" value="Genomic_DNA"/>
</dbReference>
<dbReference type="RefSeq" id="WP_003944533.1">
    <property type="nucleotide sequence ID" value="NC_012490.1"/>
</dbReference>
<dbReference type="SMR" id="C1A1L7"/>
<dbReference type="GeneID" id="93805307"/>
<dbReference type="KEGG" id="rer:RER_37940"/>
<dbReference type="eggNOG" id="COG0261">
    <property type="taxonomic scope" value="Bacteria"/>
</dbReference>
<dbReference type="HOGENOM" id="CLU_061463_3_0_11"/>
<dbReference type="Proteomes" id="UP000002204">
    <property type="component" value="Chromosome"/>
</dbReference>
<dbReference type="GO" id="GO:0005737">
    <property type="term" value="C:cytoplasm"/>
    <property type="evidence" value="ECO:0007669"/>
    <property type="project" value="UniProtKB-ARBA"/>
</dbReference>
<dbReference type="GO" id="GO:1990904">
    <property type="term" value="C:ribonucleoprotein complex"/>
    <property type="evidence" value="ECO:0007669"/>
    <property type="project" value="UniProtKB-KW"/>
</dbReference>
<dbReference type="GO" id="GO:0005840">
    <property type="term" value="C:ribosome"/>
    <property type="evidence" value="ECO:0007669"/>
    <property type="project" value="UniProtKB-KW"/>
</dbReference>
<dbReference type="GO" id="GO:0019843">
    <property type="term" value="F:rRNA binding"/>
    <property type="evidence" value="ECO:0007669"/>
    <property type="project" value="UniProtKB-UniRule"/>
</dbReference>
<dbReference type="GO" id="GO:0003735">
    <property type="term" value="F:structural constituent of ribosome"/>
    <property type="evidence" value="ECO:0007669"/>
    <property type="project" value="InterPro"/>
</dbReference>
<dbReference type="GO" id="GO:0006412">
    <property type="term" value="P:translation"/>
    <property type="evidence" value="ECO:0007669"/>
    <property type="project" value="UniProtKB-UniRule"/>
</dbReference>
<dbReference type="HAMAP" id="MF_01363">
    <property type="entry name" value="Ribosomal_bL21"/>
    <property type="match status" value="1"/>
</dbReference>
<dbReference type="InterPro" id="IPR028909">
    <property type="entry name" value="bL21-like"/>
</dbReference>
<dbReference type="InterPro" id="IPR036164">
    <property type="entry name" value="bL21-like_sf"/>
</dbReference>
<dbReference type="InterPro" id="IPR001787">
    <property type="entry name" value="Ribosomal_bL21"/>
</dbReference>
<dbReference type="InterPro" id="IPR018258">
    <property type="entry name" value="Ribosomal_bL21_CS"/>
</dbReference>
<dbReference type="NCBIfam" id="TIGR00061">
    <property type="entry name" value="L21"/>
    <property type="match status" value="1"/>
</dbReference>
<dbReference type="PANTHER" id="PTHR21349">
    <property type="entry name" value="50S RIBOSOMAL PROTEIN L21"/>
    <property type="match status" value="1"/>
</dbReference>
<dbReference type="PANTHER" id="PTHR21349:SF0">
    <property type="entry name" value="LARGE RIBOSOMAL SUBUNIT PROTEIN BL21M"/>
    <property type="match status" value="1"/>
</dbReference>
<dbReference type="Pfam" id="PF00829">
    <property type="entry name" value="Ribosomal_L21p"/>
    <property type="match status" value="1"/>
</dbReference>
<dbReference type="SUPFAM" id="SSF141091">
    <property type="entry name" value="L21p-like"/>
    <property type="match status" value="1"/>
</dbReference>
<dbReference type="PROSITE" id="PS01169">
    <property type="entry name" value="RIBOSOMAL_L21"/>
    <property type="match status" value="1"/>
</dbReference>
<sequence>MATYAIVKTGGKQYKVAVGDLVKVEKIEGEPGTAVSLAPVLVVDGSDLTTDAAKLAKVAVTSEIVEHTKGPKIRIHKFKNKTGYHKRQGHRQPITVLKVTGIK</sequence>
<protein>
    <recommendedName>
        <fullName evidence="1">Large ribosomal subunit protein bL21</fullName>
    </recommendedName>
    <alternativeName>
        <fullName evidence="2">50S ribosomal protein L21</fullName>
    </alternativeName>
</protein>
<evidence type="ECO:0000255" key="1">
    <source>
        <dbReference type="HAMAP-Rule" id="MF_01363"/>
    </source>
</evidence>
<evidence type="ECO:0000305" key="2"/>
<accession>C1A1L7</accession>
<feature type="chain" id="PRO_1000214899" description="Large ribosomal subunit protein bL21">
    <location>
        <begin position="1"/>
        <end position="103"/>
    </location>
</feature>
<proteinExistence type="inferred from homology"/>
<name>RL21_RHOE4</name>
<reference key="1">
    <citation type="submission" date="2005-03" db="EMBL/GenBank/DDBJ databases">
        <title>Comparison of the complete genome sequences of Rhodococcus erythropolis PR4 and Rhodococcus opacus B4.</title>
        <authorList>
            <person name="Takarada H."/>
            <person name="Sekine M."/>
            <person name="Hosoyama A."/>
            <person name="Yamada R."/>
            <person name="Fujisawa T."/>
            <person name="Omata S."/>
            <person name="Shimizu A."/>
            <person name="Tsukatani N."/>
            <person name="Tanikawa S."/>
            <person name="Fujita N."/>
            <person name="Harayama S."/>
        </authorList>
    </citation>
    <scope>NUCLEOTIDE SEQUENCE [LARGE SCALE GENOMIC DNA]</scope>
    <source>
        <strain>PR4 / NBRC 100887</strain>
    </source>
</reference>
<comment type="function">
    <text evidence="1">This protein binds to 23S rRNA in the presence of protein L20.</text>
</comment>
<comment type="subunit">
    <text evidence="1">Part of the 50S ribosomal subunit. Contacts protein L20.</text>
</comment>
<comment type="similarity">
    <text evidence="1">Belongs to the bacterial ribosomal protein bL21 family.</text>
</comment>
<gene>
    <name evidence="1" type="primary">rplU</name>
    <name type="ordered locus">RER_37940</name>
</gene>